<organism>
    <name type="scientific">Staphylococcus aureus (strain USA300)</name>
    <dbReference type="NCBI Taxonomy" id="367830"/>
    <lineage>
        <taxon>Bacteria</taxon>
        <taxon>Bacillati</taxon>
        <taxon>Bacillota</taxon>
        <taxon>Bacilli</taxon>
        <taxon>Bacillales</taxon>
        <taxon>Staphylococcaceae</taxon>
        <taxon>Staphylococcus</taxon>
    </lineage>
</organism>
<accession>Q2FF71</accession>
<feature type="chain" id="PRO_1000001066" description="Dihydroxy-acid dehydratase">
    <location>
        <begin position="1"/>
        <end position="562"/>
    </location>
</feature>
<feature type="active site" description="Proton acceptor" evidence="1">
    <location>
        <position position="472"/>
    </location>
</feature>
<feature type="binding site" evidence="1">
    <location>
        <position position="80"/>
    </location>
    <ligand>
        <name>Mg(2+)</name>
        <dbReference type="ChEBI" id="CHEBI:18420"/>
    </ligand>
</feature>
<feature type="binding site" evidence="1">
    <location>
        <position position="121"/>
    </location>
    <ligand>
        <name>[2Fe-2S] cluster</name>
        <dbReference type="ChEBI" id="CHEBI:190135"/>
    </ligand>
</feature>
<feature type="binding site" evidence="1">
    <location>
        <position position="122"/>
    </location>
    <ligand>
        <name>Mg(2+)</name>
        <dbReference type="ChEBI" id="CHEBI:18420"/>
    </ligand>
</feature>
<feature type="binding site" description="via carbamate group" evidence="1">
    <location>
        <position position="123"/>
    </location>
    <ligand>
        <name>Mg(2+)</name>
        <dbReference type="ChEBI" id="CHEBI:18420"/>
    </ligand>
</feature>
<feature type="binding site" evidence="1">
    <location>
        <position position="194"/>
    </location>
    <ligand>
        <name>[2Fe-2S] cluster</name>
        <dbReference type="ChEBI" id="CHEBI:190135"/>
    </ligand>
</feature>
<feature type="binding site" evidence="1">
    <location>
        <position position="446"/>
    </location>
    <ligand>
        <name>Mg(2+)</name>
        <dbReference type="ChEBI" id="CHEBI:18420"/>
    </ligand>
</feature>
<feature type="modified residue" description="N6-carboxylysine" evidence="1">
    <location>
        <position position="123"/>
    </location>
</feature>
<proteinExistence type="inferred from homology"/>
<name>ILVD_STAA3</name>
<keyword id="KW-0001">2Fe-2S</keyword>
<keyword id="KW-0028">Amino-acid biosynthesis</keyword>
<keyword id="KW-0100">Branched-chain amino acid biosynthesis</keyword>
<keyword id="KW-0408">Iron</keyword>
<keyword id="KW-0411">Iron-sulfur</keyword>
<keyword id="KW-0456">Lyase</keyword>
<keyword id="KW-0460">Magnesium</keyword>
<keyword id="KW-0479">Metal-binding</keyword>
<reference key="1">
    <citation type="journal article" date="2006" name="Lancet">
        <title>Complete genome sequence of USA300, an epidemic clone of community-acquired meticillin-resistant Staphylococcus aureus.</title>
        <authorList>
            <person name="Diep B.A."/>
            <person name="Gill S.R."/>
            <person name="Chang R.F."/>
            <person name="Phan T.H."/>
            <person name="Chen J.H."/>
            <person name="Davidson M.G."/>
            <person name="Lin F."/>
            <person name="Lin J."/>
            <person name="Carleton H.A."/>
            <person name="Mongodin E.F."/>
            <person name="Sensabaugh G.F."/>
            <person name="Perdreau-Remington F."/>
        </authorList>
    </citation>
    <scope>NUCLEOTIDE SEQUENCE [LARGE SCALE GENOMIC DNA]</scope>
    <source>
        <strain>USA300</strain>
    </source>
</reference>
<protein>
    <recommendedName>
        <fullName evidence="1">Dihydroxy-acid dehydratase</fullName>
        <shortName evidence="1">DAD</shortName>
        <ecNumber evidence="1">4.2.1.9</ecNumber>
    </recommendedName>
</protein>
<evidence type="ECO:0000255" key="1">
    <source>
        <dbReference type="HAMAP-Rule" id="MF_00012"/>
    </source>
</evidence>
<comment type="function">
    <text evidence="1">Functions in the biosynthesis of branched-chain amino acids. Catalyzes the dehydration of (2R,3R)-2,3-dihydroxy-3-methylpentanoate (2,3-dihydroxy-3-methylvalerate) into 2-oxo-3-methylpentanoate (2-oxo-3-methylvalerate) and of (2R)-2,3-dihydroxy-3-methylbutanoate (2,3-dihydroxyisovalerate) into 2-oxo-3-methylbutanoate (2-oxoisovalerate), the penultimate precursor to L-isoleucine and L-valine, respectively.</text>
</comment>
<comment type="catalytic activity">
    <reaction evidence="1">
        <text>(2R)-2,3-dihydroxy-3-methylbutanoate = 3-methyl-2-oxobutanoate + H2O</text>
        <dbReference type="Rhea" id="RHEA:24809"/>
        <dbReference type="ChEBI" id="CHEBI:11851"/>
        <dbReference type="ChEBI" id="CHEBI:15377"/>
        <dbReference type="ChEBI" id="CHEBI:49072"/>
        <dbReference type="EC" id="4.2.1.9"/>
    </reaction>
    <physiologicalReaction direction="left-to-right" evidence="1">
        <dbReference type="Rhea" id="RHEA:24810"/>
    </physiologicalReaction>
</comment>
<comment type="catalytic activity">
    <reaction evidence="1">
        <text>(2R,3R)-2,3-dihydroxy-3-methylpentanoate = (S)-3-methyl-2-oxopentanoate + H2O</text>
        <dbReference type="Rhea" id="RHEA:27694"/>
        <dbReference type="ChEBI" id="CHEBI:15377"/>
        <dbReference type="ChEBI" id="CHEBI:35146"/>
        <dbReference type="ChEBI" id="CHEBI:49258"/>
        <dbReference type="EC" id="4.2.1.9"/>
    </reaction>
    <physiologicalReaction direction="left-to-right" evidence="1">
        <dbReference type="Rhea" id="RHEA:27695"/>
    </physiologicalReaction>
</comment>
<comment type="cofactor">
    <cofactor evidence="1">
        <name>[2Fe-2S] cluster</name>
        <dbReference type="ChEBI" id="CHEBI:190135"/>
    </cofactor>
    <text evidence="1">Binds 1 [2Fe-2S] cluster per subunit. This cluster acts as a Lewis acid cofactor.</text>
</comment>
<comment type="cofactor">
    <cofactor evidence="1">
        <name>Mg(2+)</name>
        <dbReference type="ChEBI" id="CHEBI:18420"/>
    </cofactor>
</comment>
<comment type="pathway">
    <text evidence="1">Amino-acid biosynthesis; L-isoleucine biosynthesis; L-isoleucine from 2-oxobutanoate: step 3/4.</text>
</comment>
<comment type="pathway">
    <text evidence="1">Amino-acid biosynthesis; L-valine biosynthesis; L-valine from pyruvate: step 3/4.</text>
</comment>
<comment type="subunit">
    <text evidence="1">Homodimer.</text>
</comment>
<comment type="similarity">
    <text evidence="1">Belongs to the IlvD/Edd family.</text>
</comment>
<sequence length="562" mass="60052">MRSDMIKKGDHQAPARSLLHATGALKSPTDMNKPFVAICNSYIDIVPGHVHLRELADIAKEAIREAGAIPFEFNTIGVDDGIAMGHIGMRYSLPSREIIADAAETVINAHWFDGVFYIPNCDKITPGMILAAMRTNVPAIFCSGGPMKAGLSAHGKALTLSSMFEAVGAFKEGSISKEEFLDMEQNACPTCGSCAGMFTANSMNCLMEVLGLTLPYNGTALAVSDQRREMIRQAAFKLVENIKNDLKPRDIVTREAIDDAFALDMAMGGSTNTVLHTLAIANEAGIDYDLERINAIAKRTPYLSKIAPSSSYSMHDVHEAGGVPAIINELMKKDGTLHPDRITVTGKTLRENNEGKEIKNFDVIHPLDAPYDAQGGLSILFGNIAPKGAVIKVGGVDPSIKTFTGKAICFNSHDEAVEAIDNRTVRAGHVVVIRYEGPKGGPGMPEMLAPTSSIVGRGLGKDVALITDGRFSGATRGIAVGHISPEAASGGPIALIEDGDEITIDLTNRTLNVNQPEDVLARRRESLTPFKAKVKTGYLARYTALVTSANTGGVMQVPENLI</sequence>
<dbReference type="EC" id="4.2.1.9" evidence="1"/>
<dbReference type="EMBL" id="CP000255">
    <property type="protein sequence ID" value="ABD22626.1"/>
    <property type="molecule type" value="Genomic_DNA"/>
</dbReference>
<dbReference type="RefSeq" id="WP_001255791.1">
    <property type="nucleotide sequence ID" value="NZ_CP027476.1"/>
</dbReference>
<dbReference type="SMR" id="Q2FF71"/>
<dbReference type="KEGG" id="saa:SAUSA300_2006"/>
<dbReference type="HOGENOM" id="CLU_014271_4_2_9"/>
<dbReference type="OMA" id="STQGRNM"/>
<dbReference type="UniPathway" id="UPA00047">
    <property type="reaction ID" value="UER00057"/>
</dbReference>
<dbReference type="UniPathway" id="UPA00049">
    <property type="reaction ID" value="UER00061"/>
</dbReference>
<dbReference type="Proteomes" id="UP000001939">
    <property type="component" value="Chromosome"/>
</dbReference>
<dbReference type="GO" id="GO:0005829">
    <property type="term" value="C:cytosol"/>
    <property type="evidence" value="ECO:0007669"/>
    <property type="project" value="TreeGrafter"/>
</dbReference>
<dbReference type="GO" id="GO:0051537">
    <property type="term" value="F:2 iron, 2 sulfur cluster binding"/>
    <property type="evidence" value="ECO:0007669"/>
    <property type="project" value="UniProtKB-UniRule"/>
</dbReference>
<dbReference type="GO" id="GO:0004160">
    <property type="term" value="F:dihydroxy-acid dehydratase activity"/>
    <property type="evidence" value="ECO:0007669"/>
    <property type="project" value="UniProtKB-UniRule"/>
</dbReference>
<dbReference type="GO" id="GO:0000287">
    <property type="term" value="F:magnesium ion binding"/>
    <property type="evidence" value="ECO:0007669"/>
    <property type="project" value="UniProtKB-UniRule"/>
</dbReference>
<dbReference type="GO" id="GO:0009097">
    <property type="term" value="P:isoleucine biosynthetic process"/>
    <property type="evidence" value="ECO:0007669"/>
    <property type="project" value="UniProtKB-UniRule"/>
</dbReference>
<dbReference type="GO" id="GO:0009099">
    <property type="term" value="P:L-valine biosynthetic process"/>
    <property type="evidence" value="ECO:0007669"/>
    <property type="project" value="UniProtKB-UniRule"/>
</dbReference>
<dbReference type="FunFam" id="3.50.30.80:FF:000001">
    <property type="entry name" value="Dihydroxy-acid dehydratase"/>
    <property type="match status" value="1"/>
</dbReference>
<dbReference type="Gene3D" id="3.50.30.80">
    <property type="entry name" value="IlvD/EDD C-terminal domain-like"/>
    <property type="match status" value="1"/>
</dbReference>
<dbReference type="HAMAP" id="MF_00012">
    <property type="entry name" value="IlvD"/>
    <property type="match status" value="1"/>
</dbReference>
<dbReference type="InterPro" id="IPR042096">
    <property type="entry name" value="Dihydro-acid_dehy_C"/>
</dbReference>
<dbReference type="InterPro" id="IPR004404">
    <property type="entry name" value="DihydroxyA_deHydtase"/>
</dbReference>
<dbReference type="InterPro" id="IPR020558">
    <property type="entry name" value="DiOHA_6PGluconate_deHydtase_CS"/>
</dbReference>
<dbReference type="InterPro" id="IPR056740">
    <property type="entry name" value="ILV_EDD_C"/>
</dbReference>
<dbReference type="InterPro" id="IPR000581">
    <property type="entry name" value="ILV_EDD_N"/>
</dbReference>
<dbReference type="InterPro" id="IPR037237">
    <property type="entry name" value="IlvD/EDD_N"/>
</dbReference>
<dbReference type="NCBIfam" id="TIGR00110">
    <property type="entry name" value="ilvD"/>
    <property type="match status" value="1"/>
</dbReference>
<dbReference type="NCBIfam" id="NF002068">
    <property type="entry name" value="PRK00911.1"/>
    <property type="match status" value="1"/>
</dbReference>
<dbReference type="PANTHER" id="PTHR43661">
    <property type="entry name" value="D-XYLONATE DEHYDRATASE"/>
    <property type="match status" value="1"/>
</dbReference>
<dbReference type="PANTHER" id="PTHR43661:SF3">
    <property type="entry name" value="D-XYLONATE DEHYDRATASE YAGF-RELATED"/>
    <property type="match status" value="1"/>
</dbReference>
<dbReference type="Pfam" id="PF24877">
    <property type="entry name" value="ILV_EDD_C"/>
    <property type="match status" value="1"/>
</dbReference>
<dbReference type="Pfam" id="PF00920">
    <property type="entry name" value="ILVD_EDD_N"/>
    <property type="match status" value="1"/>
</dbReference>
<dbReference type="SUPFAM" id="SSF143975">
    <property type="entry name" value="IlvD/EDD N-terminal domain-like"/>
    <property type="match status" value="1"/>
</dbReference>
<dbReference type="SUPFAM" id="SSF52016">
    <property type="entry name" value="LeuD/IlvD-like"/>
    <property type="match status" value="1"/>
</dbReference>
<dbReference type="PROSITE" id="PS00886">
    <property type="entry name" value="ILVD_EDD_1"/>
    <property type="match status" value="1"/>
</dbReference>
<dbReference type="PROSITE" id="PS00887">
    <property type="entry name" value="ILVD_EDD_2"/>
    <property type="match status" value="1"/>
</dbReference>
<gene>
    <name evidence="1" type="primary">ilvD</name>
    <name type="ordered locus">SAUSA300_2006</name>
</gene>